<comment type="subcellular location">
    <subcellularLocation>
        <location evidence="1">Vacuole</location>
    </subcellularLocation>
</comment>
<evidence type="ECO:0000250" key="1"/>
<evidence type="ECO:0000255" key="2"/>
<evidence type="ECO:0000255" key="3">
    <source>
        <dbReference type="PROSITE-ProRule" id="PRU00082"/>
    </source>
</evidence>
<evidence type="ECO:0000256" key="4">
    <source>
        <dbReference type="SAM" id="MobiDB-lite"/>
    </source>
</evidence>
<protein>
    <recommendedName>
        <fullName>FAS1 domain-containing protein DEHA2G15708g</fullName>
    </recommendedName>
</protein>
<dbReference type="EMBL" id="CR382139">
    <property type="protein sequence ID" value="CAG90721.2"/>
    <property type="molecule type" value="Genomic_DNA"/>
</dbReference>
<dbReference type="RefSeq" id="XP_462225.2">
    <property type="nucleotide sequence ID" value="XM_462225.1"/>
</dbReference>
<dbReference type="SMR" id="Q6BHU6"/>
<dbReference type="FunCoup" id="Q6BHU6">
    <property type="interactions" value="17"/>
</dbReference>
<dbReference type="STRING" id="284592.Q6BHU6"/>
<dbReference type="GeneID" id="2905149"/>
<dbReference type="KEGG" id="dha:DEHA2G15708g"/>
<dbReference type="VEuPathDB" id="FungiDB:DEHA2G15708g"/>
<dbReference type="eggNOG" id="ENOG502S5NC">
    <property type="taxonomic scope" value="Eukaryota"/>
</dbReference>
<dbReference type="HOGENOM" id="CLU_052194_0_0_1"/>
<dbReference type="InParanoid" id="Q6BHU6"/>
<dbReference type="OMA" id="DSENWID"/>
<dbReference type="OrthoDB" id="5551751at2759"/>
<dbReference type="Proteomes" id="UP000000599">
    <property type="component" value="Chromosome G"/>
</dbReference>
<dbReference type="GO" id="GO:0005773">
    <property type="term" value="C:vacuole"/>
    <property type="evidence" value="ECO:0007669"/>
    <property type="project" value="UniProtKB-SubCell"/>
</dbReference>
<dbReference type="Gene3D" id="2.30.180.10">
    <property type="entry name" value="FAS1 domain"/>
    <property type="match status" value="1"/>
</dbReference>
<dbReference type="InterPro" id="IPR036378">
    <property type="entry name" value="FAS1_dom_sf"/>
</dbReference>
<dbReference type="InterPro" id="IPR000782">
    <property type="entry name" value="FAS1_domain"/>
</dbReference>
<dbReference type="InterPro" id="IPR040200">
    <property type="entry name" value="Mug57-like"/>
</dbReference>
<dbReference type="PANTHER" id="PTHR28156">
    <property type="entry name" value="FAS1 DOMAIN-CONTAINING PROTEIN YDR262W"/>
    <property type="match status" value="1"/>
</dbReference>
<dbReference type="PANTHER" id="PTHR28156:SF1">
    <property type="entry name" value="FAS1 DOMAIN-CONTAINING PROTEIN YDR262W"/>
    <property type="match status" value="1"/>
</dbReference>
<dbReference type="Pfam" id="PF02469">
    <property type="entry name" value="Fasciclin"/>
    <property type="match status" value="1"/>
</dbReference>
<dbReference type="SUPFAM" id="SSF82153">
    <property type="entry name" value="FAS1 domain"/>
    <property type="match status" value="1"/>
</dbReference>
<dbReference type="PROSITE" id="PS50213">
    <property type="entry name" value="FAS1"/>
    <property type="match status" value="1"/>
</dbReference>
<organism>
    <name type="scientific">Debaryomyces hansenii (strain ATCC 36239 / CBS 767 / BCRC 21394 / JCM 1990 / NBRC 0083 / IGC 2968)</name>
    <name type="common">Yeast</name>
    <name type="synonym">Torulaspora hansenii</name>
    <dbReference type="NCBI Taxonomy" id="284592"/>
    <lineage>
        <taxon>Eukaryota</taxon>
        <taxon>Fungi</taxon>
        <taxon>Dikarya</taxon>
        <taxon>Ascomycota</taxon>
        <taxon>Saccharomycotina</taxon>
        <taxon>Pichiomycetes</taxon>
        <taxon>Debaryomycetaceae</taxon>
        <taxon>Debaryomyces</taxon>
    </lineage>
</organism>
<reference key="1">
    <citation type="journal article" date="2004" name="Nature">
        <title>Genome evolution in yeasts.</title>
        <authorList>
            <person name="Dujon B."/>
            <person name="Sherman D."/>
            <person name="Fischer G."/>
            <person name="Durrens P."/>
            <person name="Casaregola S."/>
            <person name="Lafontaine I."/>
            <person name="de Montigny J."/>
            <person name="Marck C."/>
            <person name="Neuveglise C."/>
            <person name="Talla E."/>
            <person name="Goffard N."/>
            <person name="Frangeul L."/>
            <person name="Aigle M."/>
            <person name="Anthouard V."/>
            <person name="Babour A."/>
            <person name="Barbe V."/>
            <person name="Barnay S."/>
            <person name="Blanchin S."/>
            <person name="Beckerich J.-M."/>
            <person name="Beyne E."/>
            <person name="Bleykasten C."/>
            <person name="Boisrame A."/>
            <person name="Boyer J."/>
            <person name="Cattolico L."/>
            <person name="Confanioleri F."/>
            <person name="de Daruvar A."/>
            <person name="Despons L."/>
            <person name="Fabre E."/>
            <person name="Fairhead C."/>
            <person name="Ferry-Dumazet H."/>
            <person name="Groppi A."/>
            <person name="Hantraye F."/>
            <person name="Hennequin C."/>
            <person name="Jauniaux N."/>
            <person name="Joyet P."/>
            <person name="Kachouri R."/>
            <person name="Kerrest A."/>
            <person name="Koszul R."/>
            <person name="Lemaire M."/>
            <person name="Lesur I."/>
            <person name="Ma L."/>
            <person name="Muller H."/>
            <person name="Nicaud J.-M."/>
            <person name="Nikolski M."/>
            <person name="Oztas S."/>
            <person name="Ozier-Kalogeropoulos O."/>
            <person name="Pellenz S."/>
            <person name="Potier S."/>
            <person name="Richard G.-F."/>
            <person name="Straub M.-L."/>
            <person name="Suleau A."/>
            <person name="Swennen D."/>
            <person name="Tekaia F."/>
            <person name="Wesolowski-Louvel M."/>
            <person name="Westhof E."/>
            <person name="Wirth B."/>
            <person name="Zeniou-Meyer M."/>
            <person name="Zivanovic Y."/>
            <person name="Bolotin-Fukuhara M."/>
            <person name="Thierry A."/>
            <person name="Bouchier C."/>
            <person name="Caudron B."/>
            <person name="Scarpelli C."/>
            <person name="Gaillardin C."/>
            <person name="Weissenbach J."/>
            <person name="Wincker P."/>
            <person name="Souciet J.-L."/>
        </authorList>
    </citation>
    <scope>NUCLEOTIDE SEQUENCE [LARGE SCALE GENOMIC DNA]</scope>
    <source>
        <strain>ATCC 36239 / CBS 767 / BCRC 21394 / JCM 1990 / NBRC 0083 / IGC 2968</strain>
    </source>
</reference>
<sequence length="293" mass="33377">MKLSSILYVSVLAHLVMSKNVIDLDSFKESLHEEDHDKRDGKNVIDLEQFEASTQQEQNEKREAKNVYNLQSLKEDHIGENEKREAKNVYNLQSLKEGLDDENDKREGNVNKPEVSEEGSNKGDKRSMQNVIDIQEQDTHQNLLQSILPQLQSITIFTGYIRDDPELAMKTADSKQSMIIIAPSDDSISSKLNNLKPWEFPNELTGNSDDDRIVSENLKNFLNGHVIVDFKDKFVTSNDEIIANLVNGKQVKIKQEGSDKFKISTGDKWIKVETVKQVDNGYIFVINDVLVKP</sequence>
<gene>
    <name type="ordered locus">DEHA2G15708g</name>
</gene>
<keyword id="KW-1185">Reference proteome</keyword>
<keyword id="KW-0732">Signal</keyword>
<keyword id="KW-0926">Vacuole</keyword>
<proteinExistence type="inferred from homology"/>
<name>YFAS1_DEBHA</name>
<accession>Q6BHU6</accession>
<feature type="signal peptide" evidence="2">
    <location>
        <begin position="1"/>
        <end position="18"/>
    </location>
</feature>
<feature type="chain" id="PRO_0000008795" description="FAS1 domain-containing protein DEHA2G15708g">
    <location>
        <begin position="19"/>
        <end position="293"/>
    </location>
</feature>
<feature type="domain" description="FAS1" evidence="3">
    <location>
        <begin position="141"/>
        <end position="290"/>
    </location>
</feature>
<feature type="region of interest" description="Disordered" evidence="4">
    <location>
        <begin position="76"/>
        <end position="126"/>
    </location>
</feature>
<feature type="compositionally biased region" description="Basic and acidic residues" evidence="4">
    <location>
        <begin position="76"/>
        <end position="87"/>
    </location>
</feature>